<reference key="1">
    <citation type="submission" date="2007-05" db="EMBL/GenBank/DDBJ databases">
        <title>Complete sequence of chromosome of Acidiphilium cryptum JF-5.</title>
        <authorList>
            <consortium name="US DOE Joint Genome Institute"/>
            <person name="Copeland A."/>
            <person name="Lucas S."/>
            <person name="Lapidus A."/>
            <person name="Barry K."/>
            <person name="Detter J.C."/>
            <person name="Glavina del Rio T."/>
            <person name="Hammon N."/>
            <person name="Israni S."/>
            <person name="Dalin E."/>
            <person name="Tice H."/>
            <person name="Pitluck S."/>
            <person name="Sims D."/>
            <person name="Brettin T."/>
            <person name="Bruce D."/>
            <person name="Han C."/>
            <person name="Schmutz J."/>
            <person name="Larimer F."/>
            <person name="Land M."/>
            <person name="Hauser L."/>
            <person name="Kyrpides N."/>
            <person name="Kim E."/>
            <person name="Magnuson T."/>
            <person name="Richardson P."/>
        </authorList>
    </citation>
    <scope>NUCLEOTIDE SEQUENCE [LARGE SCALE GENOMIC DNA]</scope>
    <source>
        <strain>JF-5</strain>
    </source>
</reference>
<gene>
    <name evidence="1" type="primary">mraY</name>
    <name type="ordered locus">Acry_0060</name>
</gene>
<comment type="function">
    <text evidence="1">Catalyzes the initial step of the lipid cycle reactions in the biosynthesis of the cell wall peptidoglycan: transfers peptidoglycan precursor phospho-MurNAc-pentapeptide from UDP-MurNAc-pentapeptide onto the lipid carrier undecaprenyl phosphate, yielding undecaprenyl-pyrophosphoryl-MurNAc-pentapeptide, known as lipid I.</text>
</comment>
<comment type="catalytic activity">
    <reaction evidence="1">
        <text>UDP-N-acetyl-alpha-D-muramoyl-L-alanyl-gamma-D-glutamyl-meso-2,6-diaminopimeloyl-D-alanyl-D-alanine + di-trans,octa-cis-undecaprenyl phosphate = di-trans,octa-cis-undecaprenyl diphospho-N-acetyl-alpha-D-muramoyl-L-alanyl-D-glutamyl-meso-2,6-diaminopimeloyl-D-alanyl-D-alanine + UMP</text>
        <dbReference type="Rhea" id="RHEA:28386"/>
        <dbReference type="ChEBI" id="CHEBI:57865"/>
        <dbReference type="ChEBI" id="CHEBI:60392"/>
        <dbReference type="ChEBI" id="CHEBI:61386"/>
        <dbReference type="ChEBI" id="CHEBI:61387"/>
        <dbReference type="EC" id="2.7.8.13"/>
    </reaction>
</comment>
<comment type="cofactor">
    <cofactor evidence="1">
        <name>Mg(2+)</name>
        <dbReference type="ChEBI" id="CHEBI:18420"/>
    </cofactor>
</comment>
<comment type="pathway">
    <text evidence="1">Cell wall biogenesis; peptidoglycan biosynthesis.</text>
</comment>
<comment type="subcellular location">
    <subcellularLocation>
        <location evidence="1">Cell inner membrane</location>
        <topology evidence="1">Multi-pass membrane protein</topology>
    </subcellularLocation>
</comment>
<comment type="similarity">
    <text evidence="1">Belongs to the glycosyltransferase 4 family. MraY subfamily.</text>
</comment>
<feature type="chain" id="PRO_0000332523" description="Phospho-N-acetylmuramoyl-pentapeptide-transferase">
    <location>
        <begin position="1"/>
        <end position="362"/>
    </location>
</feature>
<feature type="transmembrane region" description="Helical" evidence="1">
    <location>
        <begin position="21"/>
        <end position="41"/>
    </location>
</feature>
<feature type="transmembrane region" description="Helical" evidence="1">
    <location>
        <begin position="75"/>
        <end position="95"/>
    </location>
</feature>
<feature type="transmembrane region" description="Helical" evidence="1">
    <location>
        <begin position="100"/>
        <end position="120"/>
    </location>
</feature>
<feature type="transmembrane region" description="Helical" evidence="1">
    <location>
        <begin position="136"/>
        <end position="156"/>
    </location>
</feature>
<feature type="transmembrane region" description="Helical" evidence="1">
    <location>
        <begin position="170"/>
        <end position="190"/>
    </location>
</feature>
<feature type="transmembrane region" description="Helical" evidence="1">
    <location>
        <begin position="201"/>
        <end position="221"/>
    </location>
</feature>
<feature type="transmembrane region" description="Helical" evidence="1">
    <location>
        <begin position="225"/>
        <end position="245"/>
    </location>
</feature>
<feature type="transmembrane region" description="Helical" evidence="1">
    <location>
        <begin position="247"/>
        <end position="267"/>
    </location>
</feature>
<feature type="transmembrane region" description="Helical" evidence="1">
    <location>
        <begin position="290"/>
        <end position="310"/>
    </location>
</feature>
<feature type="transmembrane region" description="Helical" evidence="1">
    <location>
        <begin position="339"/>
        <end position="359"/>
    </location>
</feature>
<evidence type="ECO:0000255" key="1">
    <source>
        <dbReference type="HAMAP-Rule" id="MF_00038"/>
    </source>
</evidence>
<dbReference type="EC" id="2.7.8.13" evidence="1"/>
<dbReference type="EMBL" id="CP000697">
    <property type="protein sequence ID" value="ABQ29289.1"/>
    <property type="molecule type" value="Genomic_DNA"/>
</dbReference>
<dbReference type="RefSeq" id="WP_007422359.1">
    <property type="nucleotide sequence ID" value="NC_009484.1"/>
</dbReference>
<dbReference type="SMR" id="A5FUK7"/>
<dbReference type="STRING" id="349163.Acry_0060"/>
<dbReference type="KEGG" id="acr:Acry_0060"/>
<dbReference type="eggNOG" id="COG0472">
    <property type="taxonomic scope" value="Bacteria"/>
</dbReference>
<dbReference type="HOGENOM" id="CLU_023982_0_0_5"/>
<dbReference type="UniPathway" id="UPA00219"/>
<dbReference type="Proteomes" id="UP000000245">
    <property type="component" value="Chromosome"/>
</dbReference>
<dbReference type="GO" id="GO:0005886">
    <property type="term" value="C:plasma membrane"/>
    <property type="evidence" value="ECO:0007669"/>
    <property type="project" value="UniProtKB-SubCell"/>
</dbReference>
<dbReference type="GO" id="GO:0046872">
    <property type="term" value="F:metal ion binding"/>
    <property type="evidence" value="ECO:0007669"/>
    <property type="project" value="UniProtKB-KW"/>
</dbReference>
<dbReference type="GO" id="GO:0008963">
    <property type="term" value="F:phospho-N-acetylmuramoyl-pentapeptide-transferase activity"/>
    <property type="evidence" value="ECO:0007669"/>
    <property type="project" value="UniProtKB-UniRule"/>
</dbReference>
<dbReference type="GO" id="GO:0051992">
    <property type="term" value="F:UDP-N-acetylmuramoyl-L-alanyl-D-glutamyl-meso-2,6-diaminopimelyl-D-alanyl-D-alanine:undecaprenyl-phosphate transferase activity"/>
    <property type="evidence" value="ECO:0007669"/>
    <property type="project" value="RHEA"/>
</dbReference>
<dbReference type="GO" id="GO:0051301">
    <property type="term" value="P:cell division"/>
    <property type="evidence" value="ECO:0007669"/>
    <property type="project" value="UniProtKB-KW"/>
</dbReference>
<dbReference type="GO" id="GO:0071555">
    <property type="term" value="P:cell wall organization"/>
    <property type="evidence" value="ECO:0007669"/>
    <property type="project" value="UniProtKB-KW"/>
</dbReference>
<dbReference type="GO" id="GO:0009252">
    <property type="term" value="P:peptidoglycan biosynthetic process"/>
    <property type="evidence" value="ECO:0007669"/>
    <property type="project" value="UniProtKB-UniRule"/>
</dbReference>
<dbReference type="GO" id="GO:0008360">
    <property type="term" value="P:regulation of cell shape"/>
    <property type="evidence" value="ECO:0007669"/>
    <property type="project" value="UniProtKB-KW"/>
</dbReference>
<dbReference type="CDD" id="cd06852">
    <property type="entry name" value="GT_MraY"/>
    <property type="match status" value="1"/>
</dbReference>
<dbReference type="HAMAP" id="MF_00038">
    <property type="entry name" value="MraY"/>
    <property type="match status" value="1"/>
</dbReference>
<dbReference type="InterPro" id="IPR000715">
    <property type="entry name" value="Glycosyl_transferase_4"/>
</dbReference>
<dbReference type="InterPro" id="IPR003524">
    <property type="entry name" value="PNAcMuramoyl-5peptid_Trfase"/>
</dbReference>
<dbReference type="InterPro" id="IPR018480">
    <property type="entry name" value="PNAcMuramoyl-5peptid_Trfase_CS"/>
</dbReference>
<dbReference type="NCBIfam" id="TIGR00445">
    <property type="entry name" value="mraY"/>
    <property type="match status" value="1"/>
</dbReference>
<dbReference type="PANTHER" id="PTHR22926">
    <property type="entry name" value="PHOSPHO-N-ACETYLMURAMOYL-PENTAPEPTIDE-TRANSFERASE"/>
    <property type="match status" value="1"/>
</dbReference>
<dbReference type="PANTHER" id="PTHR22926:SF5">
    <property type="entry name" value="PHOSPHO-N-ACETYLMURAMOYL-PENTAPEPTIDE-TRANSFERASE HOMOLOG"/>
    <property type="match status" value="1"/>
</dbReference>
<dbReference type="Pfam" id="PF00953">
    <property type="entry name" value="Glycos_transf_4"/>
    <property type="match status" value="1"/>
</dbReference>
<dbReference type="Pfam" id="PF10555">
    <property type="entry name" value="MraY_sig1"/>
    <property type="match status" value="1"/>
</dbReference>
<dbReference type="PROSITE" id="PS01348">
    <property type="entry name" value="MRAY_2"/>
    <property type="match status" value="1"/>
</dbReference>
<organism>
    <name type="scientific">Acidiphilium cryptum (strain JF-5)</name>
    <dbReference type="NCBI Taxonomy" id="349163"/>
    <lineage>
        <taxon>Bacteria</taxon>
        <taxon>Pseudomonadati</taxon>
        <taxon>Pseudomonadota</taxon>
        <taxon>Alphaproteobacteria</taxon>
        <taxon>Acetobacterales</taxon>
        <taxon>Acidocellaceae</taxon>
        <taxon>Acidiphilium</taxon>
    </lineage>
</organism>
<sequence length="362" mass="39023">MLYALLLPHVAAFHAFNLIRYITFRAGGACLTALVVSFLLGPRLIRWLKSLQKQGQPIRADGPERHLIEKKGTPTMGGFLILIALTVSTLLWADLRNGYVWAVLMITIGYGALGFADDFLKLTKRNTKGVPGRIKLVVQAVLGLGAAVWITQLMPGSIADSLAVPVFKHLMIPFGPLFPLVAMFVMMGASNAVNLTDGLDGLAIVPTIIAAGVFTLIAYLVGNRIFSHYLEINFVPGTGELAVFCSALIGAGMGFLWFNAPPAAVFMGDTGSLALGGALGSVAVATKNEIVLAITGGLFVVETVSVIVQVFWYKRTGRRVFLMAPLHHHFEKKGWAEPTVVIRFWIVAMILALLGLATLKIR</sequence>
<proteinExistence type="inferred from homology"/>
<keyword id="KW-0131">Cell cycle</keyword>
<keyword id="KW-0132">Cell division</keyword>
<keyword id="KW-0997">Cell inner membrane</keyword>
<keyword id="KW-1003">Cell membrane</keyword>
<keyword id="KW-0133">Cell shape</keyword>
<keyword id="KW-0961">Cell wall biogenesis/degradation</keyword>
<keyword id="KW-0460">Magnesium</keyword>
<keyword id="KW-0472">Membrane</keyword>
<keyword id="KW-0479">Metal-binding</keyword>
<keyword id="KW-0573">Peptidoglycan synthesis</keyword>
<keyword id="KW-1185">Reference proteome</keyword>
<keyword id="KW-0808">Transferase</keyword>
<keyword id="KW-0812">Transmembrane</keyword>
<keyword id="KW-1133">Transmembrane helix</keyword>
<accession>A5FUK7</accession>
<name>MRAY_ACICJ</name>
<protein>
    <recommendedName>
        <fullName evidence="1">Phospho-N-acetylmuramoyl-pentapeptide-transferase</fullName>
        <ecNumber evidence="1">2.7.8.13</ecNumber>
    </recommendedName>
    <alternativeName>
        <fullName evidence="1">UDP-MurNAc-pentapeptide phosphotransferase</fullName>
    </alternativeName>
</protein>